<accession>Q642C0</accession>
<proteinExistence type="evidence at transcript level"/>
<evidence type="ECO:0000250" key="1">
    <source>
        <dbReference type="UniProtKB" id="O75937"/>
    </source>
</evidence>
<evidence type="ECO:0000255" key="2">
    <source>
        <dbReference type="PROSITE-ProRule" id="PRU00286"/>
    </source>
</evidence>
<evidence type="ECO:0000256" key="3">
    <source>
        <dbReference type="SAM" id="MobiDB-lite"/>
    </source>
</evidence>
<sequence length="253" mass="29813">MAASGESGASGGGGSTEEAFMTFYSEVKQIEKRDSVLTSKNQIERLTRPGSSYFNLNPFEVLQIDPEVTDEEIKKRFRQLSILVHPDKNQDDADRAQKAFEAVDKAYKLLLDQEQKKRALDVIQAGKEYVEHTVKERKKQLKKEGKPTNVEEDDPELFKQAVYKQTMKLFAELEIKRKEREAKEMHERKRQREEEIEAQEKAKREREWQKNFEESRDGRVDSWRNFQANTKGKKEKKNRTFLRPPKVKMEQRE</sequence>
<dbReference type="EMBL" id="BC081863">
    <property type="protein sequence ID" value="AAH81863.1"/>
    <property type="molecule type" value="mRNA"/>
</dbReference>
<dbReference type="RefSeq" id="NP_001013186.1">
    <property type="nucleotide sequence ID" value="NM_001013168.1"/>
</dbReference>
<dbReference type="SMR" id="Q642C0"/>
<dbReference type="FunCoup" id="Q642C0">
    <property type="interactions" value="3947"/>
</dbReference>
<dbReference type="STRING" id="10116.ENSRNOP00000074065"/>
<dbReference type="iPTMnet" id="Q642C0"/>
<dbReference type="PhosphoSitePlus" id="Q642C0"/>
<dbReference type="jPOST" id="Q642C0"/>
<dbReference type="PaxDb" id="10116-ENSRNOP00000017740"/>
<dbReference type="Ensembl" id="ENSRNOT00000017740.7">
    <property type="protein sequence ID" value="ENSRNOP00000017740.5"/>
    <property type="gene ID" value="ENSRNOG00000013255.7"/>
</dbReference>
<dbReference type="GeneID" id="313035"/>
<dbReference type="KEGG" id="rno:313035"/>
<dbReference type="UCSC" id="RGD:1306024">
    <property type="organism name" value="rat"/>
</dbReference>
<dbReference type="AGR" id="RGD:1306024"/>
<dbReference type="CTD" id="22826"/>
<dbReference type="RGD" id="1306024">
    <property type="gene designation" value="Dnajc8"/>
</dbReference>
<dbReference type="eggNOG" id="KOG1150">
    <property type="taxonomic scope" value="Eukaryota"/>
</dbReference>
<dbReference type="GeneTree" id="ENSGT00390000012569"/>
<dbReference type="HOGENOM" id="CLU_070940_2_0_1"/>
<dbReference type="InParanoid" id="Q642C0"/>
<dbReference type="OMA" id="EIVNKAW"/>
<dbReference type="OrthoDB" id="342454at2759"/>
<dbReference type="PhylomeDB" id="Q642C0"/>
<dbReference type="PRO" id="PR:Q642C0"/>
<dbReference type="Proteomes" id="UP000002494">
    <property type="component" value="Chromosome 5"/>
</dbReference>
<dbReference type="Bgee" id="ENSRNOG00000013255">
    <property type="expression patterns" value="Expressed in thymus and 20 other cell types or tissues"/>
</dbReference>
<dbReference type="ExpressionAtlas" id="Q642C0">
    <property type="expression patterns" value="baseline and differential"/>
</dbReference>
<dbReference type="GO" id="GO:0005634">
    <property type="term" value="C:nucleus"/>
    <property type="evidence" value="ECO:0000250"/>
    <property type="project" value="UniProtKB"/>
</dbReference>
<dbReference type="GO" id="GO:0030544">
    <property type="term" value="F:Hsp70 protein binding"/>
    <property type="evidence" value="ECO:0000266"/>
    <property type="project" value="RGD"/>
</dbReference>
<dbReference type="CDD" id="cd06257">
    <property type="entry name" value="DnaJ"/>
    <property type="match status" value="1"/>
</dbReference>
<dbReference type="FunFam" id="1.10.287.110:FF:000026">
    <property type="entry name" value="dnaJ homolog subfamily C member 8"/>
    <property type="match status" value="1"/>
</dbReference>
<dbReference type="Gene3D" id="1.10.287.110">
    <property type="entry name" value="DnaJ domain"/>
    <property type="match status" value="1"/>
</dbReference>
<dbReference type="InterPro" id="IPR001623">
    <property type="entry name" value="DnaJ_domain"/>
</dbReference>
<dbReference type="InterPro" id="IPR042858">
    <property type="entry name" value="DNAJC8"/>
</dbReference>
<dbReference type="InterPro" id="IPR036869">
    <property type="entry name" value="J_dom_sf"/>
</dbReference>
<dbReference type="PANTHER" id="PTHR15606:SF4">
    <property type="entry name" value="DNAJ HOMOLOG SUBFAMILY C MEMBER 8"/>
    <property type="match status" value="1"/>
</dbReference>
<dbReference type="PANTHER" id="PTHR15606">
    <property type="entry name" value="DNAJ HOMOLOG SUBFAMILY C MEMBER 8/LIPOPOLYSACCHARIDE SPECIFIC RESPONSE-7-RELATED"/>
    <property type="match status" value="1"/>
</dbReference>
<dbReference type="Pfam" id="PF00226">
    <property type="entry name" value="DnaJ"/>
    <property type="match status" value="1"/>
</dbReference>
<dbReference type="PRINTS" id="PR00625">
    <property type="entry name" value="JDOMAIN"/>
</dbReference>
<dbReference type="SMART" id="SM00271">
    <property type="entry name" value="DnaJ"/>
    <property type="match status" value="1"/>
</dbReference>
<dbReference type="SUPFAM" id="SSF46565">
    <property type="entry name" value="Chaperone J-domain"/>
    <property type="match status" value="1"/>
</dbReference>
<dbReference type="PROSITE" id="PS50076">
    <property type="entry name" value="DNAJ_2"/>
    <property type="match status" value="1"/>
</dbReference>
<feature type="initiator methionine" description="Removed" evidence="1">
    <location>
        <position position="1"/>
    </location>
</feature>
<feature type="chain" id="PRO_0000071062" description="DnaJ homolog subfamily C member 8">
    <location>
        <begin position="2"/>
        <end position="253"/>
    </location>
</feature>
<feature type="domain" description="J" evidence="2">
    <location>
        <begin position="68"/>
        <end position="135"/>
    </location>
</feature>
<feature type="region of interest" description="Disordered" evidence="3">
    <location>
        <begin position="181"/>
        <end position="253"/>
    </location>
</feature>
<feature type="region of interest" description="Essential for polyglutamine aggregation suppression" evidence="1">
    <location>
        <begin position="232"/>
        <end position="253"/>
    </location>
</feature>
<feature type="short sequence motif" description="Nuclear localization signal" evidence="1">
    <location>
        <begin position="189"/>
        <end position="192"/>
    </location>
</feature>
<feature type="short sequence motif" description="Nuclear localization signal" evidence="1">
    <location>
        <begin position="203"/>
        <end position="206"/>
    </location>
</feature>
<feature type="compositionally biased region" description="Basic and acidic residues" evidence="3">
    <location>
        <begin position="181"/>
        <end position="222"/>
    </location>
</feature>
<feature type="compositionally biased region" description="Basic residues" evidence="3">
    <location>
        <begin position="231"/>
        <end position="240"/>
    </location>
</feature>
<feature type="modified residue" description="N-acetylalanine" evidence="1">
    <location>
        <position position="2"/>
    </location>
</feature>
<feature type="modified residue" description="Phosphoserine" evidence="1">
    <location>
        <position position="35"/>
    </location>
</feature>
<feature type="modified residue" description="N6-acetyllysine" evidence="1">
    <location>
        <position position="146"/>
    </location>
</feature>
<feature type="modified residue" description="Phosphoserine" evidence="1">
    <location>
        <position position="222"/>
    </location>
</feature>
<keyword id="KW-0007">Acetylation</keyword>
<keyword id="KW-0143">Chaperone</keyword>
<keyword id="KW-0539">Nucleus</keyword>
<keyword id="KW-0597">Phosphoprotein</keyword>
<keyword id="KW-1185">Reference proteome</keyword>
<reference key="1">
    <citation type="journal article" date="2004" name="Genome Res.">
        <title>The status, quality, and expansion of the NIH full-length cDNA project: the Mammalian Gene Collection (MGC).</title>
        <authorList>
            <consortium name="The MGC Project Team"/>
        </authorList>
    </citation>
    <scope>NUCLEOTIDE SEQUENCE [LARGE SCALE MRNA]</scope>
    <source>
        <tissue>Heart</tissue>
    </source>
</reference>
<organism>
    <name type="scientific">Rattus norvegicus</name>
    <name type="common">Rat</name>
    <dbReference type="NCBI Taxonomy" id="10116"/>
    <lineage>
        <taxon>Eukaryota</taxon>
        <taxon>Metazoa</taxon>
        <taxon>Chordata</taxon>
        <taxon>Craniata</taxon>
        <taxon>Vertebrata</taxon>
        <taxon>Euteleostomi</taxon>
        <taxon>Mammalia</taxon>
        <taxon>Eutheria</taxon>
        <taxon>Euarchontoglires</taxon>
        <taxon>Glires</taxon>
        <taxon>Rodentia</taxon>
        <taxon>Myomorpha</taxon>
        <taxon>Muroidea</taxon>
        <taxon>Muridae</taxon>
        <taxon>Murinae</taxon>
        <taxon>Rattus</taxon>
    </lineage>
</organism>
<protein>
    <recommendedName>
        <fullName>DnaJ homolog subfamily C member 8</fullName>
    </recommendedName>
</protein>
<comment type="function">
    <text evidence="1">Suppresses polyglutamine (polyQ) aggregation of ATXN3 in neuronal cells.</text>
</comment>
<comment type="subunit">
    <text evidence="1">Interacts with SRPK1. Interacts with HSP70 (HSPA1A or HSPA1B).</text>
</comment>
<comment type="subcellular location">
    <subcellularLocation>
        <location evidence="1">Nucleus</location>
    </subcellularLocation>
</comment>
<name>DNJC8_RAT</name>
<gene>
    <name type="primary">Dnajc8</name>
</gene>